<name>TRAP_BGYMJ</name>
<feature type="chain" id="PRO_0000415531" description="Transcriptional activator protein">
    <location>
        <begin position="1"/>
        <end position="172"/>
    </location>
</feature>
<feature type="zinc finger region" evidence="1">
    <location>
        <begin position="76"/>
        <end position="93"/>
    </location>
</feature>
<feature type="region of interest" description="Disordered" evidence="2">
    <location>
        <begin position="119"/>
        <end position="172"/>
    </location>
</feature>
<feature type="region of interest" description="Transactivation" evidence="1">
    <location>
        <begin position="158"/>
        <end position="172"/>
    </location>
</feature>
<feature type="short sequence motif" description="Nuclear localization signal" evidence="1">
    <location>
        <begin position="56"/>
        <end position="71"/>
    </location>
</feature>
<feature type="compositionally biased region" description="Polar residues" evidence="2">
    <location>
        <begin position="137"/>
        <end position="152"/>
    </location>
</feature>
<proteinExistence type="inferred from homology"/>
<organism>
    <name type="scientific">Bean golden yellow mosaic virus (isolate Puerto Rico-Japan)</name>
    <name type="common">BGYMV</name>
    <dbReference type="NCBI Taxonomy" id="222449"/>
    <lineage>
        <taxon>Viruses</taxon>
        <taxon>Monodnaviria</taxon>
        <taxon>Shotokuvirae</taxon>
        <taxon>Cressdnaviricota</taxon>
        <taxon>Repensiviricetes</taxon>
        <taxon>Geplafuvirales</taxon>
        <taxon>Geminiviridae</taxon>
        <taxon>Begomovirus</taxon>
        <taxon>Bean golden yellow mosaic virus</taxon>
    </lineage>
</organism>
<protein>
    <recommendedName>
        <fullName>Transcriptional activator protein</fullName>
        <shortName>TrAP</shortName>
    </recommendedName>
    <alternativeName>
        <fullName>19.6 kDa protein</fullName>
    </alternativeName>
    <alternativeName>
        <fullName>Protein AC2</fullName>
    </alternativeName>
    <alternativeName>
        <fullName>Protein AL2</fullName>
    </alternativeName>
</protein>
<comment type="function">
    <text evidence="1">Strong activator of the late viral genes promoters. Enhances the expression of the capsid protein and nuclear shuttle protein. Acts as a suppressor of RNA-mediated gene silencing, also known as post-transcriptional gene silencing (PTGS), a mechanism of plant viral defense that limits the accumulation of viral RNAs. Suppresses the host RNA silencing by inhibiting adenosine kinase 2 (ADK2), a kinase involved in a general methylation pathway. Also suppresses the host basal defense by interacting with and inhibiting SNF1 kinase, a key regulator of cell metabolism implicated in innate antiviral defense. Determines pathogenicity (By similarity).</text>
</comment>
<comment type="subunit">
    <text evidence="1">Monomer. Homodimer. Homooligomer. Self-interaction correlates with nuclear localization and efficient activation of transcription. Monomers suppress local silencing by interacting with and inactivating host adenosine kinase 2 (ADK2) in the cytoplasm. Interacts with and inhibits host SNF1 kinase. Binds to ssDNA (By similarity).</text>
</comment>
<comment type="subcellular location">
    <subcellularLocation>
        <location evidence="1">Host nucleus</location>
    </subcellularLocation>
    <subcellularLocation>
        <location evidence="1">Host cytoplasm</location>
    </subcellularLocation>
    <text evidence="1">The phosphorylated form appears to accumulate almost exclusively in the nucleus, whereas the non-phosphorylated form is found in both nucleus and cytoplasm.</text>
</comment>
<comment type="domain">
    <text evidence="1">The zinc finger and the transactivation region are involved in PTGS suppression.</text>
</comment>
<comment type="PTM">
    <text evidence="1">Phosphorylated.</text>
</comment>
<comment type="similarity">
    <text evidence="3">Belongs to the geminiviridae transcriptional activator protein family.</text>
</comment>
<reference key="1">
    <citation type="journal article" date="1987" name="Microbiol. Immunol.">
        <title>Total nucleotide sequences of the infectious cloned DNAs of bean golden mosaic virus.</title>
        <authorList>
            <person name="Morinaga T."/>
            <person name="Ikegami M."/>
            <person name="Shimotohno K."/>
            <person name="Miura K."/>
        </authorList>
    </citation>
    <scope>NUCLEOTIDE SEQUENCE [GENOMIC DNA]</scope>
</reference>
<organismHost>
    <name type="scientific">Macroptilium lathyroides</name>
    <dbReference type="NCBI Taxonomy" id="260885"/>
</organismHost>
<organismHost>
    <name type="scientific">Malvastrum coromandelianum</name>
    <dbReference type="NCBI Taxonomy" id="108453"/>
</organismHost>
<organismHost>
    <name type="scientific">Phaseolus lunatus</name>
    <name type="common">Lima bean</name>
    <name type="synonym">Phaseolus limensis</name>
    <dbReference type="NCBI Taxonomy" id="3884"/>
</organismHost>
<organismHost>
    <name type="scientific">Phaseolus vulgaris</name>
    <name type="common">Kidney bean</name>
    <name type="synonym">French bean</name>
    <dbReference type="NCBI Taxonomy" id="3885"/>
</organismHost>
<evidence type="ECO:0000250" key="1"/>
<evidence type="ECO:0000256" key="2">
    <source>
        <dbReference type="SAM" id="MobiDB-lite"/>
    </source>
</evidence>
<evidence type="ECO:0000305" key="3"/>
<dbReference type="EMBL" id="D00201">
    <property type="protein sequence ID" value="BAA00139.1"/>
    <property type="molecule type" value="Genomic_DNA"/>
</dbReference>
<dbReference type="RefSeq" id="NP_040775.1">
    <property type="nucleotide sequence ID" value="NC_001439.1"/>
</dbReference>
<dbReference type="GeneID" id="988091"/>
<dbReference type="KEGG" id="vg:988091"/>
<dbReference type="Proteomes" id="UP000008769">
    <property type="component" value="Genome"/>
</dbReference>
<dbReference type="GO" id="GO:0030430">
    <property type="term" value="C:host cell cytoplasm"/>
    <property type="evidence" value="ECO:0007669"/>
    <property type="project" value="UniProtKB-SubCell"/>
</dbReference>
<dbReference type="GO" id="GO:0042025">
    <property type="term" value="C:host cell nucleus"/>
    <property type="evidence" value="ECO:0007669"/>
    <property type="project" value="UniProtKB-SubCell"/>
</dbReference>
<dbReference type="GO" id="GO:0019028">
    <property type="term" value="C:viral capsid"/>
    <property type="evidence" value="ECO:0007669"/>
    <property type="project" value="InterPro"/>
</dbReference>
<dbReference type="GO" id="GO:0003677">
    <property type="term" value="F:DNA binding"/>
    <property type="evidence" value="ECO:0007669"/>
    <property type="project" value="UniProtKB-KW"/>
</dbReference>
<dbReference type="GO" id="GO:0005198">
    <property type="term" value="F:structural molecule activity"/>
    <property type="evidence" value="ECO:0007669"/>
    <property type="project" value="InterPro"/>
</dbReference>
<dbReference type="GO" id="GO:0008270">
    <property type="term" value="F:zinc ion binding"/>
    <property type="evidence" value="ECO:0007669"/>
    <property type="project" value="UniProtKB-KW"/>
</dbReference>
<dbReference type="GO" id="GO:0052170">
    <property type="term" value="P:symbiont-mediated suppression of host innate immune response"/>
    <property type="evidence" value="ECO:0007669"/>
    <property type="project" value="UniProtKB-KW"/>
</dbReference>
<dbReference type="InterPro" id="IPR000942">
    <property type="entry name" value="Gemini_AL2"/>
</dbReference>
<dbReference type="Pfam" id="PF01440">
    <property type="entry name" value="Gemini_AL2"/>
    <property type="match status" value="1"/>
</dbReference>
<dbReference type="PRINTS" id="PR00230">
    <property type="entry name" value="GEMCOATAL2"/>
</dbReference>
<gene>
    <name type="ORF">AC2</name>
    <name type="ORF">AL2</name>
</gene>
<sequence length="172" mass="19551">MESRFKLKEEYHQSCCAIQVRVPVIKTSSTKRKTELYTTGPFIMRSSSPSQPPSIKAQHRIAKHKAIRRRRIDLNCGCSIFYHIKCADHGFTHRGEHHCASGREFRFYLGGTKSPLFQDHAGGRSSIHTDKDIPHPSQVQSQPQESTGSPQSIPELPSLDDIDSSFWDDIFK</sequence>
<keyword id="KW-0010">Activator</keyword>
<keyword id="KW-0238">DNA-binding</keyword>
<keyword id="KW-1035">Host cytoplasm</keyword>
<keyword id="KW-1048">Host nucleus</keyword>
<keyword id="KW-0945">Host-virus interaction</keyword>
<keyword id="KW-1090">Inhibition of host innate immune response by virus</keyword>
<keyword id="KW-0479">Metal-binding</keyword>
<keyword id="KW-0597">Phosphoprotein</keyword>
<keyword id="KW-1185">Reference proteome</keyword>
<keyword id="KW-0941">Suppressor of RNA silencing</keyword>
<keyword id="KW-0899">Viral immunoevasion</keyword>
<keyword id="KW-0862">Zinc</keyword>
<keyword id="KW-0863">Zinc-finger</keyword>
<accession>P0CK38</accession>
<accession>P05174</accession>
<accession>Q67582</accession>